<reference key="1">
    <citation type="journal article" date="2007" name="J. Gen. Virol.">
        <title>Sequence and organization of the Heliothis virescens ascovirus genome.</title>
        <authorList>
            <person name="Asgari S."/>
            <person name="Davis J."/>
            <person name="Wood D."/>
            <person name="Wilson P."/>
            <person name="McGrath A."/>
        </authorList>
    </citation>
    <scope>NUCLEOTIDE SEQUENCE [LARGE SCALE GENOMIC DNA]</scope>
</reference>
<accession>A4KX71</accession>
<organism>
    <name type="scientific">Heliothis virescens ascovirus 3e</name>
    <name type="common">HvAV-3e</name>
    <dbReference type="NCBI Taxonomy" id="260797"/>
    <lineage>
        <taxon>Viruses</taxon>
        <taxon>Varidnaviria</taxon>
        <taxon>Bamfordvirae</taxon>
        <taxon>Nucleocytoviricota</taxon>
        <taxon>Megaviricetes</taxon>
        <taxon>Pimascovirales</taxon>
        <taxon>Ascoviridae</taxon>
        <taxon>Ascovirus</taxon>
        <taxon>Ascovirus TnAV2a</taxon>
    </lineage>
</organism>
<evidence type="ECO:0000255" key="1">
    <source>
        <dbReference type="PROSITE-ProRule" id="PRU00541"/>
    </source>
</evidence>
<evidence type="ECO:0000305" key="2"/>
<gene>
    <name type="ORF">ORF15</name>
</gene>
<dbReference type="EC" id="3.6.4.13"/>
<dbReference type="EMBL" id="EF133465">
    <property type="protein sequence ID" value="ABO37201.1"/>
    <property type="molecule type" value="Genomic_DNA"/>
</dbReference>
<dbReference type="RefSeq" id="YP_001110868.1">
    <property type="nucleotide sequence ID" value="NC_009233.1"/>
</dbReference>
<dbReference type="KEGG" id="vg:5076031"/>
<dbReference type="OrthoDB" id="605at10239"/>
<dbReference type="Proteomes" id="UP000001324">
    <property type="component" value="Genome"/>
</dbReference>
<dbReference type="GO" id="GO:0005524">
    <property type="term" value="F:ATP binding"/>
    <property type="evidence" value="ECO:0007669"/>
    <property type="project" value="UniProtKB-KW"/>
</dbReference>
<dbReference type="GO" id="GO:0016887">
    <property type="term" value="F:ATP hydrolysis activity"/>
    <property type="evidence" value="ECO:0007669"/>
    <property type="project" value="RHEA"/>
</dbReference>
<dbReference type="GO" id="GO:0003676">
    <property type="term" value="F:nucleic acid binding"/>
    <property type="evidence" value="ECO:0007669"/>
    <property type="project" value="InterPro"/>
</dbReference>
<dbReference type="GO" id="GO:0003724">
    <property type="term" value="F:RNA helicase activity"/>
    <property type="evidence" value="ECO:0007669"/>
    <property type="project" value="UniProtKB-EC"/>
</dbReference>
<dbReference type="Gene3D" id="3.40.50.300">
    <property type="entry name" value="P-loop containing nucleotide triphosphate hydrolases"/>
    <property type="match status" value="2"/>
</dbReference>
<dbReference type="InterPro" id="IPR011545">
    <property type="entry name" value="DEAD/DEAH_box_helicase_dom"/>
</dbReference>
<dbReference type="InterPro" id="IPR014001">
    <property type="entry name" value="Helicase_ATP-bd"/>
</dbReference>
<dbReference type="InterPro" id="IPR027417">
    <property type="entry name" value="P-loop_NTPase"/>
</dbReference>
<dbReference type="Pfam" id="PF00270">
    <property type="entry name" value="DEAD"/>
    <property type="match status" value="1"/>
</dbReference>
<dbReference type="SMART" id="SM00487">
    <property type="entry name" value="DEXDc"/>
    <property type="match status" value="1"/>
</dbReference>
<dbReference type="SUPFAM" id="SSF52540">
    <property type="entry name" value="P-loop containing nucleoside triphosphate hydrolases"/>
    <property type="match status" value="2"/>
</dbReference>
<dbReference type="PROSITE" id="PS51192">
    <property type="entry name" value="HELICASE_ATP_BIND_1"/>
    <property type="match status" value="1"/>
</dbReference>
<feature type="chain" id="PRO_0000329954" description="Putative ATP-dependent RNA helicase">
    <location>
        <begin position="1"/>
        <end position="944"/>
    </location>
</feature>
<feature type="domain" description="Helicase ATP-binding" evidence="1">
    <location>
        <begin position="66"/>
        <end position="235"/>
    </location>
</feature>
<feature type="domain" description="Helicase C-terminal">
    <location>
        <begin position="451"/>
        <end position="523"/>
    </location>
</feature>
<feature type="short sequence motif" description="DEAH box">
    <location>
        <begin position="183"/>
        <end position="186"/>
    </location>
</feature>
<feature type="binding site" evidence="1">
    <location>
        <begin position="79"/>
        <end position="86"/>
    </location>
    <ligand>
        <name>ATP</name>
        <dbReference type="ChEBI" id="CHEBI:30616"/>
    </ligand>
</feature>
<name>HELI1_HVAVE</name>
<protein>
    <recommendedName>
        <fullName>Putative ATP-dependent RNA helicase</fullName>
        <ecNumber>3.6.4.13</ecNumber>
    </recommendedName>
</protein>
<comment type="catalytic activity">
    <reaction>
        <text>ATP + H2O = ADP + phosphate + H(+)</text>
        <dbReference type="Rhea" id="RHEA:13065"/>
        <dbReference type="ChEBI" id="CHEBI:15377"/>
        <dbReference type="ChEBI" id="CHEBI:15378"/>
        <dbReference type="ChEBI" id="CHEBI:30616"/>
        <dbReference type="ChEBI" id="CHEBI:43474"/>
        <dbReference type="ChEBI" id="CHEBI:456216"/>
        <dbReference type="EC" id="3.6.4.13"/>
    </reaction>
</comment>
<comment type="similarity">
    <text evidence="2">Belongs to the DEAD box helicase family. DEAH subfamily.</text>
</comment>
<sequence length="944" mass="106260">MLKYALPLYPIAESTDESWSYEHLDKLTTYAEFNETQLLYSEDDDRDHNNETRKPMPHQILVANYTTPRSPIDGIIVIHGVGTGKTLTAILAMINNITAGHDQGMKRGLVLTPNRAVMNSFRNELNCYYRSRFSDRHLNDFEIDRYLSKTFFFNTITAFANTVSRTSDVVLHKEWNATFVVIDEAHDLSVQGVDYPKINGFLKLLTSRKVILLTATPMRNNLSDLVPLHNLLMKLSTHDITVEQFNRDLVTRENCAEYVCARESPTEYFLRKFAGLVSYLPSIVDVNEVDIVNVGERGLYGLRNTVIVVHDMSDVMSATYHYAGAGERSDRDVALLRQRQICRFVFPDGTYGAEGYATWMDNKTGRPTRKFLDMLRGGTGTSREDILKNVAKYSPRYAWIAKSVIDAAERGEKSMVYDDLVTGSGLLVFAAVLEALGLERGYGRGARSFLCLTREVMTVPSIVSALKIFNDRKNVKGANVAIILGSRVIAEGITLKDVIHEHVVAHWNDAETEQIIGRGIRYQSHAYTIADWGSDAKPNVFVYRHATIDSRKKNIKTVDILMYATSEAKRKNIDGALRALSSVALTCRNSNNTFVKSVYRGRYTGRNITNDNTIPLDAPRVTKSFIAQLDQLFDYRNQNVVVKVDSLLKMFNIDPNSKYSLELLFVIMNTIQKHGQLDVDKYIDCNGQYISISKCVDEFRQRPTFVYPFVLDNVSLYGLDVYRDTLAKDIISPLILLDAERHTGGLYPMTRLPVIVIQGLLELAISTQGTKDPYDTLNKMIQYYGTSTNGDNDIRAAVWLATTTGDDSGYRILNEHSGSWVSCPSSMVPFVQAMKSSVEAQLNNDMLAKNLKYYGVLHPSTDDFCIKTVSQNTPTNRRCVMTGRKCVTWSGEKLKELARDIGIDTGDSSSVQNRKTICYNIRSKLEELGAVITDVTCGVQAKRK</sequence>
<proteinExistence type="inferred from homology"/>
<organismHost>
    <name type="scientific">Noctuidae</name>
    <name type="common">owlet moths</name>
    <dbReference type="NCBI Taxonomy" id="7100"/>
</organismHost>
<keyword id="KW-0067">ATP-binding</keyword>
<keyword id="KW-0347">Helicase</keyword>
<keyword id="KW-0378">Hydrolase</keyword>
<keyword id="KW-0547">Nucleotide-binding</keyword>
<keyword id="KW-1185">Reference proteome</keyword>